<keyword id="KW-0496">Mitochondrion</keyword>
<keyword id="KW-1185">Reference proteome</keyword>
<keyword id="KW-0687">Ribonucleoprotein</keyword>
<keyword id="KW-0689">Ribosomal protein</keyword>
<keyword id="KW-0809">Transit peptide</keyword>
<organism>
    <name type="scientific">Candida albicans (strain SC5314 / ATCC MYA-2876)</name>
    <name type="common">Yeast</name>
    <dbReference type="NCBI Taxonomy" id="237561"/>
    <lineage>
        <taxon>Eukaryota</taxon>
        <taxon>Fungi</taxon>
        <taxon>Dikarya</taxon>
        <taxon>Ascomycota</taxon>
        <taxon>Saccharomycotina</taxon>
        <taxon>Pichiomycetes</taxon>
        <taxon>Debaryomycetaceae</taxon>
        <taxon>Candida/Lodderomyces clade</taxon>
        <taxon>Candida</taxon>
    </lineage>
</organism>
<evidence type="ECO:0000250" key="1">
    <source>
        <dbReference type="UniProtKB" id="P38120"/>
    </source>
</evidence>
<evidence type="ECO:0000255" key="2"/>
<evidence type="ECO:0000256" key="3">
    <source>
        <dbReference type="SAM" id="MobiDB-lite"/>
    </source>
</evidence>
<evidence type="ECO:0000305" key="4"/>
<gene>
    <name type="primary">MRPS9</name>
    <name type="ordered locus">CAALFM_C112340CA</name>
    <name type="ORF">CaO19.12695</name>
    <name type="ORF">CaO19.5230</name>
</gene>
<feature type="transit peptide" description="Mitochondrion" evidence="2">
    <location>
        <begin position="1"/>
        <end status="unknown"/>
    </location>
</feature>
<feature type="chain" id="PRO_0000030645" description="Small ribosomal subunit protein uS9m">
    <location>
        <begin status="unknown"/>
        <end position="336"/>
    </location>
</feature>
<feature type="region of interest" description="Disordered" evidence="3">
    <location>
        <begin position="32"/>
        <end position="81"/>
    </location>
</feature>
<feature type="compositionally biased region" description="Low complexity" evidence="3">
    <location>
        <begin position="33"/>
        <end position="45"/>
    </location>
</feature>
<feature type="compositionally biased region" description="Polar residues" evidence="3">
    <location>
        <begin position="65"/>
        <end position="81"/>
    </location>
</feature>
<comment type="function">
    <text evidence="1">Component of the mitochondrial ribosome (mitoribosome), a dedicated translation machinery responsible for the synthesis of mitochondrial genome-encoded proteins, including at least some of the essential transmembrane subunits of the mitochondrial respiratory chain. The mitoribosomes are attached to the mitochondrial inner membrane and translation products are cotranslationally integrated into the membrane.</text>
</comment>
<comment type="subunit">
    <text evidence="1">Component of the mitochondrial small ribosomal subunit (mt-SSU).</text>
</comment>
<comment type="subcellular location">
    <subcellularLocation>
        <location evidence="1">Mitochondrion</location>
    </subcellularLocation>
</comment>
<comment type="similarity">
    <text evidence="4">Belongs to the universal ribosomal protein uS9 family.</text>
</comment>
<name>RT09_CANAL</name>
<proteinExistence type="evidence at transcript level"/>
<accession>O94150</accession>
<accession>A0A1D8PFD8</accession>
<accession>Q5A3P0</accession>
<reference key="1">
    <citation type="journal article" date="1999" name="Yeast">
        <title>Over-expression of Candida albicans mitochondrial ribosomal protein S9 (MrpS9p) disturbs mitochondrial function in Saccharomyces cerevisiae.</title>
        <authorList>
            <person name="Wiltshire C."/>
            <person name="Black S."/>
            <person name="Brown A.J.P."/>
        </authorList>
    </citation>
    <scope>NUCLEOTIDE SEQUENCE [MRNA]</scope>
</reference>
<reference key="2">
    <citation type="journal article" date="2004" name="Proc. Natl. Acad. Sci. U.S.A.">
        <title>The diploid genome sequence of Candida albicans.</title>
        <authorList>
            <person name="Jones T."/>
            <person name="Federspiel N.A."/>
            <person name="Chibana H."/>
            <person name="Dungan J."/>
            <person name="Kalman S."/>
            <person name="Magee B.B."/>
            <person name="Newport G."/>
            <person name="Thorstenson Y.R."/>
            <person name="Agabian N."/>
            <person name="Magee P.T."/>
            <person name="Davis R.W."/>
            <person name="Scherer S."/>
        </authorList>
    </citation>
    <scope>NUCLEOTIDE SEQUENCE [LARGE SCALE GENOMIC DNA]</scope>
    <source>
        <strain>SC5314 / ATCC MYA-2876</strain>
    </source>
</reference>
<reference key="3">
    <citation type="journal article" date="2007" name="Genome Biol.">
        <title>Assembly of the Candida albicans genome into sixteen supercontigs aligned on the eight chromosomes.</title>
        <authorList>
            <person name="van het Hoog M."/>
            <person name="Rast T.J."/>
            <person name="Martchenko M."/>
            <person name="Grindle S."/>
            <person name="Dignard D."/>
            <person name="Hogues H."/>
            <person name="Cuomo C."/>
            <person name="Berriman M."/>
            <person name="Scherer S."/>
            <person name="Magee B.B."/>
            <person name="Whiteway M."/>
            <person name="Chibana H."/>
            <person name="Nantel A."/>
            <person name="Magee P.T."/>
        </authorList>
    </citation>
    <scope>GENOME REANNOTATION</scope>
    <source>
        <strain>SC5314 / ATCC MYA-2876</strain>
    </source>
</reference>
<reference key="4">
    <citation type="journal article" date="2013" name="Genome Biol.">
        <title>Assembly of a phased diploid Candida albicans genome facilitates allele-specific measurements and provides a simple model for repeat and indel structure.</title>
        <authorList>
            <person name="Muzzey D."/>
            <person name="Schwartz K."/>
            <person name="Weissman J.S."/>
            <person name="Sherlock G."/>
        </authorList>
    </citation>
    <scope>NUCLEOTIDE SEQUENCE [LARGE SCALE GENOMIC DNA]</scope>
    <scope>GENOME REANNOTATION</scope>
    <source>
        <strain>SC5314 / ATCC MYA-2876</strain>
    </source>
</reference>
<dbReference type="EMBL" id="AF067962">
    <property type="protein sequence ID" value="AAD03590.1"/>
    <property type="molecule type" value="mRNA"/>
</dbReference>
<dbReference type="EMBL" id="CP017623">
    <property type="protein sequence ID" value="AOW26852.1"/>
    <property type="molecule type" value="Genomic_DNA"/>
</dbReference>
<dbReference type="RefSeq" id="XP_716299.1">
    <property type="nucleotide sequence ID" value="XM_711206.1"/>
</dbReference>
<dbReference type="SMR" id="O94150"/>
<dbReference type="FunCoup" id="O94150">
    <property type="interactions" value="208"/>
</dbReference>
<dbReference type="STRING" id="237561.O94150"/>
<dbReference type="EnsemblFungi" id="C1_12340C_A-T">
    <property type="protein sequence ID" value="C1_12340C_A-T-p1"/>
    <property type="gene ID" value="C1_12340C_A"/>
</dbReference>
<dbReference type="GeneID" id="3642064"/>
<dbReference type="KEGG" id="cal:CAALFM_C112340CA"/>
<dbReference type="CGD" id="CAL0000191081">
    <property type="gene designation" value="MRPS9"/>
</dbReference>
<dbReference type="VEuPathDB" id="FungiDB:C1_12340C_A"/>
<dbReference type="eggNOG" id="KOG1697">
    <property type="taxonomic scope" value="Eukaryota"/>
</dbReference>
<dbReference type="HOGENOM" id="CLU_036531_0_0_1"/>
<dbReference type="InParanoid" id="O94150"/>
<dbReference type="OMA" id="RESAMWA"/>
<dbReference type="OrthoDB" id="10254627at2759"/>
<dbReference type="PRO" id="PR:O94150"/>
<dbReference type="Proteomes" id="UP000000559">
    <property type="component" value="Chromosome 1"/>
</dbReference>
<dbReference type="GO" id="GO:0005763">
    <property type="term" value="C:mitochondrial small ribosomal subunit"/>
    <property type="evidence" value="ECO:0000250"/>
    <property type="project" value="CGD"/>
</dbReference>
<dbReference type="GO" id="GO:0003723">
    <property type="term" value="F:RNA binding"/>
    <property type="evidence" value="ECO:0000318"/>
    <property type="project" value="GO_Central"/>
</dbReference>
<dbReference type="GO" id="GO:0003735">
    <property type="term" value="F:structural constituent of ribosome"/>
    <property type="evidence" value="ECO:0000250"/>
    <property type="project" value="CGD"/>
</dbReference>
<dbReference type="GO" id="GO:0006412">
    <property type="term" value="P:translation"/>
    <property type="evidence" value="ECO:0000250"/>
    <property type="project" value="CGD"/>
</dbReference>
<dbReference type="FunFam" id="3.30.230.10:FF:000001">
    <property type="entry name" value="30S ribosomal protein S9"/>
    <property type="match status" value="1"/>
</dbReference>
<dbReference type="Gene3D" id="3.30.230.10">
    <property type="match status" value="1"/>
</dbReference>
<dbReference type="InterPro" id="IPR020568">
    <property type="entry name" value="Ribosomal_Su5_D2-typ_SF"/>
</dbReference>
<dbReference type="InterPro" id="IPR000754">
    <property type="entry name" value="Ribosomal_uS9"/>
</dbReference>
<dbReference type="InterPro" id="IPR023035">
    <property type="entry name" value="Ribosomal_uS9_bac/plastid"/>
</dbReference>
<dbReference type="InterPro" id="IPR020574">
    <property type="entry name" value="Ribosomal_uS9_CS"/>
</dbReference>
<dbReference type="InterPro" id="IPR014721">
    <property type="entry name" value="Ribsml_uS5_D2-typ_fold_subgr"/>
</dbReference>
<dbReference type="NCBIfam" id="NF001099">
    <property type="entry name" value="PRK00132.1"/>
    <property type="match status" value="1"/>
</dbReference>
<dbReference type="PANTHER" id="PTHR21569">
    <property type="entry name" value="RIBOSOMAL PROTEIN S9"/>
    <property type="match status" value="1"/>
</dbReference>
<dbReference type="PANTHER" id="PTHR21569:SF1">
    <property type="entry name" value="SMALL RIBOSOMAL SUBUNIT PROTEIN US9M"/>
    <property type="match status" value="1"/>
</dbReference>
<dbReference type="Pfam" id="PF00380">
    <property type="entry name" value="Ribosomal_S9"/>
    <property type="match status" value="1"/>
</dbReference>
<dbReference type="SUPFAM" id="SSF54211">
    <property type="entry name" value="Ribosomal protein S5 domain 2-like"/>
    <property type="match status" value="1"/>
</dbReference>
<dbReference type="PROSITE" id="PS00360">
    <property type="entry name" value="RIBOSOMAL_S9"/>
    <property type="match status" value="1"/>
</dbReference>
<protein>
    <recommendedName>
        <fullName evidence="1">Small ribosomal subunit protein uS9m</fullName>
    </recommendedName>
    <alternativeName>
        <fullName>37S ribosomal protein S9, mitochondrial</fullName>
    </alternativeName>
</protein>
<sequence>MALRLITRFRGLNIPQRSLHQSTFRLNETIQSTTTTTTTTTTTTTSDEIPTTKPRFQSRFRRNQQPHQQQRSPYTSSQVTENLNIGEINRVRTVPTLMTYYGGNPVHEDNMNRLRAVLKKYQQLPVRVVPDREIQSQKFIGFDDYLEKTQSGTRVKKIHYRELITLLNRLRTIDLELMPLEVSEILSEYTSKSVSKIVQLSREKTLDCFGRAKTQAKRKSSIAKIYLVKGEGEVLVNGKSLIEFFPNIYARKNLLYPFQVVEQEGKYNVFAQVTGGGYTGQSEAIMYAIAKALVVFNPLLKPRLSKAGLMKSDTRIVERKKPGKVKARKSPTWVKR</sequence>